<feature type="chain" id="PRO_0000064995" description="Bypass of stop codon protein 5">
    <location>
        <begin position="1"/>
        <end position="489"/>
    </location>
</feature>
<feature type="region of interest" description="Disordered" evidence="2">
    <location>
        <begin position="1"/>
        <end position="42"/>
    </location>
</feature>
<feature type="compositionally biased region" description="Low complexity" evidence="2">
    <location>
        <begin position="18"/>
        <end position="30"/>
    </location>
</feature>
<feature type="modified residue" description="Phosphoserine" evidence="5">
    <location>
        <position position="111"/>
    </location>
</feature>
<feature type="modified residue" description="Phosphoserine" evidence="5">
    <location>
        <position position="350"/>
    </location>
</feature>
<feature type="sequence conflict" description="In Ref. 3; AAU09780." evidence="4" ref="3">
    <original>Y</original>
    <variation>N</variation>
    <location>
        <position position="209"/>
    </location>
</feature>
<accession>P53755</accession>
<accession>D6W1P4</accession>
<accession>Q66R20</accession>
<organism>
    <name type="scientific">Saccharomyces cerevisiae (strain ATCC 204508 / S288c)</name>
    <name type="common">Baker's yeast</name>
    <dbReference type="NCBI Taxonomy" id="559292"/>
    <lineage>
        <taxon>Eukaryota</taxon>
        <taxon>Fungi</taxon>
        <taxon>Dikarya</taxon>
        <taxon>Ascomycota</taxon>
        <taxon>Saccharomycotina</taxon>
        <taxon>Saccharomycetes</taxon>
        <taxon>Saccharomycetales</taxon>
        <taxon>Saccharomycetaceae</taxon>
        <taxon>Saccharomyces</taxon>
    </lineage>
</organism>
<name>BSC5_YEAST</name>
<reference key="1">
    <citation type="journal article" date="1997" name="Nature">
        <title>The nucleotide sequence of Saccharomyces cerevisiae chromosome XIV and its evolutionary implications.</title>
        <authorList>
            <person name="Philippsen P."/>
            <person name="Kleine K."/>
            <person name="Poehlmann R."/>
            <person name="Duesterhoeft A."/>
            <person name="Hamberg K."/>
            <person name="Hegemann J.H."/>
            <person name="Obermaier B."/>
            <person name="Urrestarazu L.A."/>
            <person name="Aert R."/>
            <person name="Albermann K."/>
            <person name="Altmann R."/>
            <person name="Andre B."/>
            <person name="Baladron V."/>
            <person name="Ballesta J.P.G."/>
            <person name="Becam A.-M."/>
            <person name="Beinhauer J.D."/>
            <person name="Boskovic J."/>
            <person name="Buitrago M.J."/>
            <person name="Bussereau F."/>
            <person name="Coster F."/>
            <person name="Crouzet M."/>
            <person name="D'Angelo M."/>
            <person name="Dal Pero F."/>
            <person name="De Antoni A."/>
            <person name="del Rey F."/>
            <person name="Doignon F."/>
            <person name="Domdey H."/>
            <person name="Dubois E."/>
            <person name="Fiedler T.A."/>
            <person name="Fleig U."/>
            <person name="Floeth M."/>
            <person name="Fritz C."/>
            <person name="Gaillardin C."/>
            <person name="Garcia-Cantalejo J.M."/>
            <person name="Glansdorff N."/>
            <person name="Goffeau A."/>
            <person name="Gueldener U."/>
            <person name="Herbert C.J."/>
            <person name="Heumann K."/>
            <person name="Heuss-Neitzel D."/>
            <person name="Hilbert H."/>
            <person name="Hinni K."/>
            <person name="Iraqui Houssaini I."/>
            <person name="Jacquet M."/>
            <person name="Jimenez A."/>
            <person name="Jonniaux J.-L."/>
            <person name="Karpfinger-Hartl L."/>
            <person name="Lanfranchi G."/>
            <person name="Lepingle A."/>
            <person name="Levesque H."/>
            <person name="Lyck R."/>
            <person name="Maftahi M."/>
            <person name="Mallet L."/>
            <person name="Maurer C.T.C."/>
            <person name="Messenguy F."/>
            <person name="Mewes H.-W."/>
            <person name="Moestl D."/>
            <person name="Nasr F."/>
            <person name="Nicaud J.-M."/>
            <person name="Niedenthal R.K."/>
            <person name="Pandolfo D."/>
            <person name="Pierard A."/>
            <person name="Piravandi E."/>
            <person name="Planta R.J."/>
            <person name="Pohl T.M."/>
            <person name="Purnelle B."/>
            <person name="Rebischung C."/>
            <person name="Remacha M.A."/>
            <person name="Revuelta J.L."/>
            <person name="Rinke M."/>
            <person name="Saiz J.E."/>
            <person name="Sartorello F."/>
            <person name="Scherens B."/>
            <person name="Sen-Gupta M."/>
            <person name="Soler-Mira A."/>
            <person name="Urbanus J.H.M."/>
            <person name="Valle G."/>
            <person name="Van Dyck L."/>
            <person name="Verhasselt P."/>
            <person name="Vierendeels F."/>
            <person name="Vissers S."/>
            <person name="Voet M."/>
            <person name="Volckaert G."/>
            <person name="Wach A."/>
            <person name="Wambutt R."/>
            <person name="Wedler H."/>
            <person name="Zollner A."/>
            <person name="Hani J."/>
        </authorList>
    </citation>
    <scope>NUCLEOTIDE SEQUENCE [LARGE SCALE GENOMIC DNA]</scope>
    <source>
        <strain>ATCC 204508 / S288c</strain>
    </source>
</reference>
<reference key="2">
    <citation type="journal article" date="2014" name="G3 (Bethesda)">
        <title>The reference genome sequence of Saccharomyces cerevisiae: Then and now.</title>
        <authorList>
            <person name="Engel S.R."/>
            <person name="Dietrich F.S."/>
            <person name="Fisk D.G."/>
            <person name="Binkley G."/>
            <person name="Balakrishnan R."/>
            <person name="Costanzo M.C."/>
            <person name="Dwight S.S."/>
            <person name="Hitz B.C."/>
            <person name="Karra K."/>
            <person name="Nash R.S."/>
            <person name="Weng S."/>
            <person name="Wong E.D."/>
            <person name="Lloyd P."/>
            <person name="Skrzypek M.S."/>
            <person name="Miyasato S.R."/>
            <person name="Simison M."/>
            <person name="Cherry J.M."/>
        </authorList>
    </citation>
    <scope>GENOME REANNOTATION</scope>
    <source>
        <strain>ATCC 204508 / S288c</strain>
    </source>
</reference>
<reference key="3">
    <citation type="journal article" date="2007" name="Genome Res.">
        <title>Approaching a complete repository of sequence-verified protein-encoding clones for Saccharomyces cerevisiae.</title>
        <authorList>
            <person name="Hu Y."/>
            <person name="Rolfs A."/>
            <person name="Bhullar B."/>
            <person name="Murthy T.V.S."/>
            <person name="Zhu C."/>
            <person name="Berger M.F."/>
            <person name="Camargo A.A."/>
            <person name="Kelley F."/>
            <person name="McCarron S."/>
            <person name="Jepson D."/>
            <person name="Richardson A."/>
            <person name="Raphael J."/>
            <person name="Moreira D."/>
            <person name="Taycher E."/>
            <person name="Zuo D."/>
            <person name="Mohr S."/>
            <person name="Kane M.F."/>
            <person name="Williamson J."/>
            <person name="Simpson A.J.G."/>
            <person name="Bulyk M.L."/>
            <person name="Harlow E."/>
            <person name="Marsischky G."/>
            <person name="Kolodner R.D."/>
            <person name="LaBaer J."/>
        </authorList>
    </citation>
    <scope>NUCLEOTIDE SEQUENCE [GENOMIC DNA]</scope>
    <source>
        <strain>ATCC 204508 / S288c</strain>
    </source>
</reference>
<reference key="4">
    <citation type="journal article" date="2003" name="Nucleic Acids Res.">
        <title>Identification of stop codon readthrough genes in Saccharomyces cerevisiae.</title>
        <authorList>
            <person name="Namy O."/>
            <person name="Duchateau-Nguyen G."/>
            <person name="Hatin I."/>
            <person name="Hermann-Le Denmat S."/>
            <person name="Termier M."/>
            <person name="Rousset J.-P."/>
        </authorList>
    </citation>
    <scope>GENE NAME</scope>
</reference>
<reference key="5">
    <citation type="journal article" date="2008" name="Mol. Cell. Proteomics">
        <title>A multidimensional chromatography technology for in-depth phosphoproteome analysis.</title>
        <authorList>
            <person name="Albuquerque C.P."/>
            <person name="Smolka M.B."/>
            <person name="Payne S.H."/>
            <person name="Bafna V."/>
            <person name="Eng J."/>
            <person name="Zhou H."/>
        </authorList>
    </citation>
    <scope>PHOSPHORYLATION [LARGE SCALE ANALYSIS] AT SER-111 AND SER-350</scope>
    <scope>IDENTIFICATION BY MASS SPECTROMETRY [LARGE SCALE ANALYSIS]</scope>
</reference>
<reference key="6">
    <citation type="journal article" date="2024" name="Biology">
        <title>The Involvement of YNR069C in Protein Synthesis in the Baker's Yeast, Saccharomyces cerevisiae.</title>
        <authorList>
            <person name="Takallou S."/>
            <person name="Hajikarimlou M."/>
            <person name="Al-Gafari M."/>
            <person name="Wang J."/>
            <person name="Kazmirchuk T.D.D."/>
            <person name="Said K.B."/>
            <person name="Samanfar B."/>
            <person name="Golshani A."/>
        </authorList>
    </citation>
    <scope>FUNCTION</scope>
    <scope>DISRUPTION PHENOTYPE</scope>
</reference>
<gene>
    <name type="primary">BSC5</name>
    <name type="ordered locus">YNR069C</name>
    <name type="ORF">N3555</name>
</gene>
<sequence length="489" mass="54831">MQESKEPQNKFEGCQRISSSSSTLFGGTSFEEPRCGTSQGKEEDAFACNNGDHCSSITNVQEDDFVLPELLPSFEMYENLLSNIPQSSFDTYFPENPPFYEVASRNQSIPSEGESGNDMRILTGDIVGPDNHEVTVDGRRFASGPAESQIRNYDDTKGIPVENIYALPRIKTPIATELYVTKTAPKFGQLPKHESMLREYTSGDIIHGYFTVENKSTKPIKFDMFYLTLEGTTSSKTQSPFGIQKTTERILRMVDMAASWSYNHEDVNTGEDLCGFFDSIDKTSFGLPNSRILNPGDKRKKFFTFKIPNQLLDVTCKHGHFSHSLLPPTLGFDRPSSSHPELSTLKFSESLGYGRLSERGSSLWLNDSSSGSLINYSINAMIVGKDVASGRVCLMSEKKYSIRIVPFGFQNNPISREKCLKDLEDFDIEIANRLGMIEKVFSKIERAIPIHKEDIQEANRSDQLSPLRGKYEWNAVAGNTENGTLKKKH</sequence>
<protein>
    <recommendedName>
        <fullName>Bypass of stop codon protein 5</fullName>
    </recommendedName>
</protein>
<evidence type="ECO:0000250" key="1">
    <source>
        <dbReference type="UniProtKB" id="P48524"/>
    </source>
</evidence>
<evidence type="ECO:0000256" key="2">
    <source>
        <dbReference type="SAM" id="MobiDB-lite"/>
    </source>
</evidence>
<evidence type="ECO:0000269" key="3">
    <source>
    </source>
</evidence>
<evidence type="ECO:0000305" key="4"/>
<evidence type="ECO:0007744" key="5">
    <source>
    </source>
</evidence>
<keyword id="KW-0597">Phosphoprotein</keyword>
<keyword id="KW-1185">Reference proteome</keyword>
<keyword id="KW-0810">Translation regulation</keyword>
<keyword id="KW-0833">Ubl conjugation pathway</keyword>
<comment type="function">
    <text evidence="1 3">Appears to play a role in translation fidelity, and may act when translation is compromised (PubMed:38534408). May be a component of the ubiquitination pathway (By similarity).</text>
</comment>
<comment type="disruption phenotype">
    <text evidence="3">Increases readthrough at premature stop codons and leads to an increased rate of translation.</text>
</comment>
<comment type="miscellaneous">
    <text>Open reading frame exhibits genomic organization compatible with a translational readthrough-dependent mode of expression.</text>
</comment>
<comment type="similarity">
    <text evidence="4">Belongs to the BUL1 family.</text>
</comment>
<proteinExistence type="evidence at protein level"/>
<dbReference type="EMBL" id="Z71684">
    <property type="protein sequence ID" value="CAA96351.1"/>
    <property type="molecule type" value="Genomic_DNA"/>
</dbReference>
<dbReference type="EMBL" id="AY723863">
    <property type="protein sequence ID" value="AAU09780.1"/>
    <property type="molecule type" value="Genomic_DNA"/>
</dbReference>
<dbReference type="EMBL" id="BK006947">
    <property type="protein sequence ID" value="DAA10610.1"/>
    <property type="molecule type" value="Genomic_DNA"/>
</dbReference>
<dbReference type="PIR" id="S63401">
    <property type="entry name" value="S63401"/>
</dbReference>
<dbReference type="RefSeq" id="NP_014467.3">
    <property type="nucleotide sequence ID" value="NM_001183246.3"/>
</dbReference>
<dbReference type="BioGRID" id="35895">
    <property type="interactions" value="23"/>
</dbReference>
<dbReference type="DIP" id="DIP-1400N"/>
<dbReference type="FunCoup" id="P53755">
    <property type="interactions" value="47"/>
</dbReference>
<dbReference type="IntAct" id="P53755">
    <property type="interactions" value="4"/>
</dbReference>
<dbReference type="MINT" id="P53755"/>
<dbReference type="STRING" id="4932.YNR069C"/>
<dbReference type="iPTMnet" id="P53755"/>
<dbReference type="PaxDb" id="4932-YNR069C"/>
<dbReference type="PeptideAtlas" id="P53755"/>
<dbReference type="EnsemblFungi" id="YNR069C_mRNA">
    <property type="protein sequence ID" value="YNR069C"/>
    <property type="gene ID" value="YNR069C"/>
</dbReference>
<dbReference type="GeneID" id="855806"/>
<dbReference type="KEGG" id="sce:YNR069C"/>
<dbReference type="AGR" id="SGD:S000005352"/>
<dbReference type="SGD" id="S000005352">
    <property type="gene designation" value="BSC5"/>
</dbReference>
<dbReference type="VEuPathDB" id="FungiDB:YNR069C"/>
<dbReference type="eggNOG" id="ENOG502QSAC">
    <property type="taxonomic scope" value="Eukaryota"/>
</dbReference>
<dbReference type="GeneTree" id="ENSGT00940000176311"/>
<dbReference type="HOGENOM" id="CLU_631849_0_0_1"/>
<dbReference type="InParanoid" id="P53755"/>
<dbReference type="OMA" id="EHESPRN"/>
<dbReference type="OrthoDB" id="2283785at2759"/>
<dbReference type="BioCyc" id="YEAST:G3O-33373-MONOMER"/>
<dbReference type="BioGRID-ORCS" id="855806">
    <property type="hits" value="0 hits in 10 CRISPR screens"/>
</dbReference>
<dbReference type="PRO" id="PR:P53755"/>
<dbReference type="Proteomes" id="UP000002311">
    <property type="component" value="Chromosome XIV"/>
</dbReference>
<dbReference type="RNAct" id="P53755">
    <property type="molecule type" value="protein"/>
</dbReference>
<dbReference type="GO" id="GO:0000151">
    <property type="term" value="C:ubiquitin ligase complex"/>
    <property type="evidence" value="ECO:0000318"/>
    <property type="project" value="GO_Central"/>
</dbReference>
<dbReference type="GO" id="GO:0034450">
    <property type="term" value="F:ubiquitin-ubiquitin ligase activity"/>
    <property type="evidence" value="ECO:0000318"/>
    <property type="project" value="GO_Central"/>
</dbReference>
<dbReference type="GO" id="GO:0006513">
    <property type="term" value="P:protein monoubiquitination"/>
    <property type="evidence" value="ECO:0000318"/>
    <property type="project" value="GO_Central"/>
</dbReference>
<dbReference type="GO" id="GO:0000209">
    <property type="term" value="P:protein polyubiquitination"/>
    <property type="evidence" value="ECO:0000318"/>
    <property type="project" value="GO_Central"/>
</dbReference>
<dbReference type="GO" id="GO:0006417">
    <property type="term" value="P:regulation of translation"/>
    <property type="evidence" value="ECO:0000315"/>
    <property type="project" value="UniProtKB"/>
</dbReference>
<dbReference type="InterPro" id="IPR039634">
    <property type="entry name" value="Bul1-like"/>
</dbReference>
<dbReference type="InterPro" id="IPR007519">
    <property type="entry name" value="Bul1_N"/>
</dbReference>
<dbReference type="PANTHER" id="PTHR31904">
    <property type="entry name" value="BYPASS OF STOP CODON PROTEIN 5-RELATED"/>
    <property type="match status" value="1"/>
</dbReference>
<dbReference type="PANTHER" id="PTHR31904:SF1">
    <property type="entry name" value="BYPASS OF STOP CODON PROTEIN 5-RELATED"/>
    <property type="match status" value="1"/>
</dbReference>
<dbReference type="Pfam" id="PF04425">
    <property type="entry name" value="Bul1_N"/>
    <property type="match status" value="1"/>
</dbReference>